<keyword id="KW-0903">Direct protein sequencing</keyword>
<keyword id="KW-1015">Disulfide bond</keyword>
<keyword id="KW-0872">Ion channel impairing toxin</keyword>
<keyword id="KW-0166">Nematocyst</keyword>
<keyword id="KW-0528">Neurotoxin</keyword>
<keyword id="KW-0964">Secreted</keyword>
<keyword id="KW-0800">Toxin</keyword>
<keyword id="KW-0738">Voltage-gated sodium channel impairing toxin</keyword>
<protein>
    <recommendedName>
        <fullName evidence="6">Delta-actitoxin-Avd1c</fullName>
        <shortName evidence="6">Delta-AITX-Avd1c</shortName>
    </recommendedName>
    <alternativeName>
        <fullName evidence="9">ATX-II</fullName>
        <shortName evidence="7">ATX II</shortName>
    </alternativeName>
    <alternativeName>
        <fullName>Anemonia sulcata toxin 2</fullName>
        <shortName>As2</shortName>
    </alternativeName>
    <alternativeName>
        <fullName>Neurotoxin 2</fullName>
    </alternativeName>
    <alternativeName>
        <fullName evidence="8 10">Toxin II</fullName>
    </alternativeName>
</protein>
<name>NA12_ANESU</name>
<sequence length="47" mass="4941">GVPCLCDSDGPSVRGNTLSGIIWLAGCPSGWHNCKKHGPTIGWCCKQ</sequence>
<feature type="chain" id="PRO_0000221513" description="Delta-actitoxin-Avd1c" evidence="5">
    <location>
        <begin position="1"/>
        <end position="47"/>
    </location>
</feature>
<feature type="disulfide bond" evidence="2">
    <location>
        <begin position="4"/>
        <end position="44"/>
    </location>
</feature>
<feature type="disulfide bond" evidence="2">
    <location>
        <begin position="6"/>
        <end position="34"/>
    </location>
</feature>
<feature type="disulfide bond" evidence="2">
    <location>
        <begin position="27"/>
        <end position="45"/>
    </location>
</feature>
<feature type="sequence variant" description="In 50% of the molecules.">
    <original>V</original>
    <variation>I</variation>
    <location>
        <position position="2"/>
    </location>
</feature>
<evidence type="ECO:0000269" key="1">
    <source>
    </source>
</evidence>
<evidence type="ECO:0000269" key="2">
    <source>
    </source>
</evidence>
<evidence type="ECO:0000269" key="3">
    <source>
    </source>
</evidence>
<evidence type="ECO:0000269" key="4">
    <source>
    </source>
</evidence>
<evidence type="ECO:0000269" key="5">
    <source>
    </source>
</evidence>
<evidence type="ECO:0000303" key="6">
    <source>
    </source>
</evidence>
<evidence type="ECO:0000303" key="7">
    <source>
    </source>
</evidence>
<evidence type="ECO:0000303" key="8">
    <source>
    </source>
</evidence>
<evidence type="ECO:0000303" key="9">
    <source>
    </source>
</evidence>
<evidence type="ECO:0000303" key="10">
    <source>
    </source>
</evidence>
<evidence type="ECO:0000305" key="11"/>
<accession>P01528</accession>
<organism>
    <name type="scientific">Anemonia sulcata</name>
    <name type="common">Mediterranean snakelocks sea anemone</name>
    <dbReference type="NCBI Taxonomy" id="6108"/>
    <lineage>
        <taxon>Eukaryota</taxon>
        <taxon>Metazoa</taxon>
        <taxon>Cnidaria</taxon>
        <taxon>Anthozoa</taxon>
        <taxon>Hexacorallia</taxon>
        <taxon>Actiniaria</taxon>
        <taxon>Actiniidae</taxon>
        <taxon>Anemonia</taxon>
    </lineage>
</organism>
<reference key="1">
    <citation type="journal article" date="1976" name="Eur. J. Biochem.">
        <title>Amino-acid sequence of a coelenterate toxin: toxin II from Anemonia sulcata.</title>
        <authorList>
            <person name="Wunderer G."/>
            <person name="Fritz H."/>
            <person name="Wachter E."/>
            <person name="Machleidt W."/>
        </authorList>
    </citation>
    <scope>PROTEIN SEQUENCE</scope>
    <source>
        <tissue>Nematoblast</tissue>
    </source>
</reference>
<reference key="2">
    <citation type="journal article" date="1978" name="Hoppe-Seyler's Z. Physiol. Chem.">
        <title>The disulfide bridges of toxin II from Anemonia sulcata.</title>
        <authorList>
            <person name="Wunderer G."/>
        </authorList>
    </citation>
    <scope>DISULFIDE BONDS</scope>
    <source>
        <tissue>Nematoblast</tissue>
    </source>
</reference>
<reference key="3">
    <citation type="journal article" date="1985" name="Pflugers Arch.">
        <title>Anemonia sulcata toxins modify activation and inactivation of Na+ currents in a crayfish neurone.</title>
        <authorList>
            <person name="Hartung K."/>
            <person name="Rathmayer W."/>
        </authorList>
    </citation>
    <scope>FUNCTION</scope>
</reference>
<reference key="4">
    <citation type="journal article" date="1996" name="J. Membr. Biol.">
        <title>Sea anemone toxin (ATX II) modulation of heart and skeletal muscle sodium channel alpha-subunits expressed in tsA201 cells.</title>
        <authorList>
            <person name="Chahine M."/>
            <person name="Plante E."/>
            <person name="Kallen R.G."/>
        </authorList>
    </citation>
    <scope>FUNCTION</scope>
</reference>
<reference key="5">
    <citation type="journal article" date="1997" name="J. Gen. Physiol.">
        <title>Functional expression of Drosophila para sodium channels. Modulation by the membrane protein TipE and toxin pharmacology.</title>
        <authorList>
            <person name="Warmke J.W."/>
            <person name="Reenan R.A."/>
            <person name="Wang P."/>
            <person name="Qian S."/>
            <person name="Arena J.P."/>
            <person name="Wang J."/>
            <person name="Wunderler D."/>
            <person name="Liu K."/>
            <person name="Kaczorowski G.J."/>
            <person name="Van der Ploeg L.H.T."/>
            <person name="Ganetzky B."/>
            <person name="Cohen C.J."/>
        </authorList>
    </citation>
    <scope>FUNCTION</scope>
</reference>
<reference key="6">
    <citation type="journal article" date="2004" name="J. Biol. Chem.">
        <title>Binding specificity of sea anemone toxins to Nav 1.1-1.6 sodium channels: unexpected contributions from differences in the IV/S3-S4 outer loop.</title>
        <authorList>
            <person name="Oliveira J.S."/>
            <person name="Redaelli E."/>
            <person name="Zaharenko A.J."/>
            <person name="Cassulini R.R."/>
            <person name="Konno K."/>
            <person name="Pimenta D.C."/>
            <person name="Freitas J.C."/>
            <person name="Clare J.J."/>
            <person name="Wanke E."/>
        </authorList>
    </citation>
    <scope>FUNCTION</scope>
</reference>
<reference key="7">
    <citation type="journal article" date="2004" name="J. Biol. Chem.">
        <authorList>
            <person name="Oliveira J.S."/>
            <person name="Redaelli E."/>
            <person name="Zaharenko A.J."/>
            <person name="Cassulini R.R."/>
            <person name="Konno K."/>
            <person name="Pimenta D.C."/>
            <person name="Freitas J.C."/>
            <person name="Clare J.J."/>
            <person name="Wanke E."/>
        </authorList>
    </citation>
    <scope>ERRATUM OF PUBMED:15169781</scope>
</reference>
<reference key="8">
    <citation type="journal article" date="2012" name="Toxicon">
        <title>Development of a rational nomenclature for naming peptide and protein toxins from sea anemones.</title>
        <authorList>
            <person name="Oliveira J.S."/>
            <person name="Fuentes-Silva D."/>
            <person name="King G.F."/>
        </authorList>
    </citation>
    <scope>NOMENCLATURE</scope>
</reference>
<comment type="function">
    <text evidence="1 3 4">Binds specifically to voltage-gated sodium channels (Nav) (site 3), thereby delaying their inactivation. Has a strong effect on crustaceans and insects (DmNav1) and a weaker effect on mammals. This toxin is highly potent at mammalian Nav1.1/SCN1A (EC(50)=6.01 nM) and Nav1.2/SCN2A (EC(50)=7.88 nM) (PubMed:15169781). It also has great activity on Nav1.5/SCN5A (EC(50)=49.05 nM), Nav1.4/SCN4A (EC(50)=109.49 nM) and Nav1.6/SCN8A (EC(50)=about 180 nM) and is less potent on Nav1.3/SCN3A (EC(50)=759.22 nM) (when measured as the increase in the slow component) (PubMed:15169781).</text>
</comment>
<comment type="subcellular location">
    <subcellularLocation>
        <location evidence="11">Secreted</location>
    </subcellularLocation>
    <subcellularLocation>
        <location evidence="11">Nematocyst</location>
    </subcellularLocation>
</comment>
<comment type="similarity">
    <text evidence="11">Belongs to the sea anemone sodium channel inhibitory toxin family. Type I subfamily.</text>
</comment>
<comment type="caution">
    <text evidence="11">Opinions are divided on whether Anemonia viridis (Forsskal, 1775) and Anemonia sulcata (Pennant, 1777) are separate species.</text>
</comment>
<dbReference type="PIR" id="A91240">
    <property type="entry name" value="TZAZ"/>
</dbReference>
<dbReference type="SMR" id="P01528"/>
<dbReference type="GO" id="GO:0005576">
    <property type="term" value="C:extracellular region"/>
    <property type="evidence" value="ECO:0007669"/>
    <property type="project" value="UniProtKB-SubCell"/>
</dbReference>
<dbReference type="GO" id="GO:0042151">
    <property type="term" value="C:nematocyst"/>
    <property type="evidence" value="ECO:0007669"/>
    <property type="project" value="UniProtKB-SubCell"/>
</dbReference>
<dbReference type="GO" id="GO:0017080">
    <property type="term" value="F:sodium channel regulator activity"/>
    <property type="evidence" value="ECO:0007669"/>
    <property type="project" value="UniProtKB-KW"/>
</dbReference>
<dbReference type="GO" id="GO:0090729">
    <property type="term" value="F:toxin activity"/>
    <property type="evidence" value="ECO:0007669"/>
    <property type="project" value="UniProtKB-KW"/>
</dbReference>
<dbReference type="GO" id="GO:0009966">
    <property type="term" value="P:regulation of signal transduction"/>
    <property type="evidence" value="ECO:0007669"/>
    <property type="project" value="InterPro"/>
</dbReference>
<dbReference type="Gene3D" id="2.20.20.10">
    <property type="entry name" value="Anthopleurin-A"/>
    <property type="match status" value="1"/>
</dbReference>
<dbReference type="InterPro" id="IPR000693">
    <property type="entry name" value="Anenome_toxin"/>
</dbReference>
<dbReference type="InterPro" id="IPR023355">
    <property type="entry name" value="Myo_ane_neurotoxin_sf"/>
</dbReference>
<dbReference type="Pfam" id="PF00706">
    <property type="entry name" value="Toxin_4"/>
    <property type="match status" value="1"/>
</dbReference>
<dbReference type="PIRSF" id="PIRSF001905">
    <property type="entry name" value="Anenome_toxin"/>
    <property type="match status" value="1"/>
</dbReference>
<dbReference type="SUPFAM" id="SSF57392">
    <property type="entry name" value="Defensin-like"/>
    <property type="match status" value="1"/>
</dbReference>
<proteinExistence type="evidence at protein level"/>